<accession>B0KQJ3</accession>
<name>MURA_PSEPG</name>
<feature type="chain" id="PRO_1000075978" description="UDP-N-acetylglucosamine 1-carboxyvinyltransferase">
    <location>
        <begin position="1"/>
        <end position="421"/>
    </location>
</feature>
<feature type="active site" description="Proton donor" evidence="1">
    <location>
        <position position="117"/>
    </location>
</feature>
<feature type="binding site" evidence="1">
    <location>
        <begin position="22"/>
        <end position="23"/>
    </location>
    <ligand>
        <name>phosphoenolpyruvate</name>
        <dbReference type="ChEBI" id="CHEBI:58702"/>
    </ligand>
</feature>
<feature type="binding site" evidence="1">
    <location>
        <position position="93"/>
    </location>
    <ligand>
        <name>UDP-N-acetyl-alpha-D-glucosamine</name>
        <dbReference type="ChEBI" id="CHEBI:57705"/>
    </ligand>
</feature>
<feature type="binding site" evidence="1">
    <location>
        <begin position="122"/>
        <end position="126"/>
    </location>
    <ligand>
        <name>UDP-N-acetyl-alpha-D-glucosamine</name>
        <dbReference type="ChEBI" id="CHEBI:57705"/>
    </ligand>
</feature>
<feature type="binding site" evidence="1">
    <location>
        <position position="308"/>
    </location>
    <ligand>
        <name>UDP-N-acetyl-alpha-D-glucosamine</name>
        <dbReference type="ChEBI" id="CHEBI:57705"/>
    </ligand>
</feature>
<feature type="binding site" evidence="1">
    <location>
        <position position="330"/>
    </location>
    <ligand>
        <name>UDP-N-acetyl-alpha-D-glucosamine</name>
        <dbReference type="ChEBI" id="CHEBI:57705"/>
    </ligand>
</feature>
<feature type="modified residue" description="2-(S-cysteinyl)pyruvic acid O-phosphothioketal" evidence="1">
    <location>
        <position position="117"/>
    </location>
</feature>
<keyword id="KW-0131">Cell cycle</keyword>
<keyword id="KW-0132">Cell division</keyword>
<keyword id="KW-0133">Cell shape</keyword>
<keyword id="KW-0961">Cell wall biogenesis/degradation</keyword>
<keyword id="KW-0963">Cytoplasm</keyword>
<keyword id="KW-0573">Peptidoglycan synthesis</keyword>
<keyword id="KW-0670">Pyruvate</keyword>
<keyword id="KW-0808">Transferase</keyword>
<dbReference type="EC" id="2.5.1.7" evidence="1"/>
<dbReference type="EMBL" id="CP000926">
    <property type="protein sequence ID" value="ABY96881.1"/>
    <property type="molecule type" value="Genomic_DNA"/>
</dbReference>
<dbReference type="RefSeq" id="WP_012270667.1">
    <property type="nucleotide sequence ID" value="NC_010322.1"/>
</dbReference>
<dbReference type="SMR" id="B0KQJ3"/>
<dbReference type="KEGG" id="ppg:PputGB1_0971"/>
<dbReference type="eggNOG" id="COG0766">
    <property type="taxonomic scope" value="Bacteria"/>
</dbReference>
<dbReference type="HOGENOM" id="CLU_027387_0_0_6"/>
<dbReference type="UniPathway" id="UPA00219"/>
<dbReference type="Proteomes" id="UP000002157">
    <property type="component" value="Chromosome"/>
</dbReference>
<dbReference type="GO" id="GO:0005737">
    <property type="term" value="C:cytoplasm"/>
    <property type="evidence" value="ECO:0007669"/>
    <property type="project" value="UniProtKB-SubCell"/>
</dbReference>
<dbReference type="GO" id="GO:0008760">
    <property type="term" value="F:UDP-N-acetylglucosamine 1-carboxyvinyltransferase activity"/>
    <property type="evidence" value="ECO:0007669"/>
    <property type="project" value="UniProtKB-UniRule"/>
</dbReference>
<dbReference type="GO" id="GO:0051301">
    <property type="term" value="P:cell division"/>
    <property type="evidence" value="ECO:0007669"/>
    <property type="project" value="UniProtKB-KW"/>
</dbReference>
<dbReference type="GO" id="GO:0071555">
    <property type="term" value="P:cell wall organization"/>
    <property type="evidence" value="ECO:0007669"/>
    <property type="project" value="UniProtKB-KW"/>
</dbReference>
<dbReference type="GO" id="GO:0009252">
    <property type="term" value="P:peptidoglycan biosynthetic process"/>
    <property type="evidence" value="ECO:0007669"/>
    <property type="project" value="UniProtKB-UniRule"/>
</dbReference>
<dbReference type="GO" id="GO:0008360">
    <property type="term" value="P:regulation of cell shape"/>
    <property type="evidence" value="ECO:0007669"/>
    <property type="project" value="UniProtKB-KW"/>
</dbReference>
<dbReference type="GO" id="GO:0019277">
    <property type="term" value="P:UDP-N-acetylgalactosamine biosynthetic process"/>
    <property type="evidence" value="ECO:0007669"/>
    <property type="project" value="InterPro"/>
</dbReference>
<dbReference type="CDD" id="cd01555">
    <property type="entry name" value="UdpNAET"/>
    <property type="match status" value="1"/>
</dbReference>
<dbReference type="FunFam" id="3.65.10.10:FF:000002">
    <property type="entry name" value="UDP-N-acetylglucosamine 1-carboxyvinyltransferase"/>
    <property type="match status" value="1"/>
</dbReference>
<dbReference type="Gene3D" id="3.65.10.10">
    <property type="entry name" value="Enolpyruvate transferase domain"/>
    <property type="match status" value="2"/>
</dbReference>
<dbReference type="HAMAP" id="MF_00111">
    <property type="entry name" value="MurA"/>
    <property type="match status" value="1"/>
</dbReference>
<dbReference type="InterPro" id="IPR001986">
    <property type="entry name" value="Enolpyruvate_Tfrase_dom"/>
</dbReference>
<dbReference type="InterPro" id="IPR036968">
    <property type="entry name" value="Enolpyruvate_Tfrase_sf"/>
</dbReference>
<dbReference type="InterPro" id="IPR050068">
    <property type="entry name" value="MurA_subfamily"/>
</dbReference>
<dbReference type="InterPro" id="IPR013792">
    <property type="entry name" value="RNA3'P_cycl/enolpyr_Trfase_a/b"/>
</dbReference>
<dbReference type="InterPro" id="IPR005750">
    <property type="entry name" value="UDP_GlcNAc_COvinyl_MurA"/>
</dbReference>
<dbReference type="NCBIfam" id="TIGR01072">
    <property type="entry name" value="murA"/>
    <property type="match status" value="1"/>
</dbReference>
<dbReference type="NCBIfam" id="NF006873">
    <property type="entry name" value="PRK09369.1"/>
    <property type="match status" value="1"/>
</dbReference>
<dbReference type="PANTHER" id="PTHR43783">
    <property type="entry name" value="UDP-N-ACETYLGLUCOSAMINE 1-CARBOXYVINYLTRANSFERASE"/>
    <property type="match status" value="1"/>
</dbReference>
<dbReference type="PANTHER" id="PTHR43783:SF1">
    <property type="entry name" value="UDP-N-ACETYLGLUCOSAMINE 1-CARBOXYVINYLTRANSFERASE"/>
    <property type="match status" value="1"/>
</dbReference>
<dbReference type="Pfam" id="PF00275">
    <property type="entry name" value="EPSP_synthase"/>
    <property type="match status" value="1"/>
</dbReference>
<dbReference type="SUPFAM" id="SSF55205">
    <property type="entry name" value="EPT/RTPC-like"/>
    <property type="match status" value="1"/>
</dbReference>
<evidence type="ECO:0000255" key="1">
    <source>
        <dbReference type="HAMAP-Rule" id="MF_00111"/>
    </source>
</evidence>
<gene>
    <name evidence="1" type="primary">murA</name>
    <name type="ordered locus">PputGB1_0971</name>
</gene>
<proteinExistence type="inferred from homology"/>
<organism>
    <name type="scientific">Pseudomonas putida (strain GB-1)</name>
    <dbReference type="NCBI Taxonomy" id="76869"/>
    <lineage>
        <taxon>Bacteria</taxon>
        <taxon>Pseudomonadati</taxon>
        <taxon>Pseudomonadota</taxon>
        <taxon>Gammaproteobacteria</taxon>
        <taxon>Pseudomonadales</taxon>
        <taxon>Pseudomonadaceae</taxon>
        <taxon>Pseudomonas</taxon>
    </lineage>
</organism>
<comment type="function">
    <text evidence="1">Cell wall formation. Adds enolpyruvyl to UDP-N-acetylglucosamine.</text>
</comment>
<comment type="catalytic activity">
    <reaction evidence="1">
        <text>phosphoenolpyruvate + UDP-N-acetyl-alpha-D-glucosamine = UDP-N-acetyl-3-O-(1-carboxyvinyl)-alpha-D-glucosamine + phosphate</text>
        <dbReference type="Rhea" id="RHEA:18681"/>
        <dbReference type="ChEBI" id="CHEBI:43474"/>
        <dbReference type="ChEBI" id="CHEBI:57705"/>
        <dbReference type="ChEBI" id="CHEBI:58702"/>
        <dbReference type="ChEBI" id="CHEBI:68483"/>
        <dbReference type="EC" id="2.5.1.7"/>
    </reaction>
</comment>
<comment type="pathway">
    <text evidence="1">Cell wall biogenesis; peptidoglycan biosynthesis.</text>
</comment>
<comment type="subcellular location">
    <subcellularLocation>
        <location evidence="1">Cytoplasm</location>
    </subcellularLocation>
</comment>
<comment type="similarity">
    <text evidence="1">Belongs to the EPSP synthase family. MurA subfamily.</text>
</comment>
<protein>
    <recommendedName>
        <fullName evidence="1">UDP-N-acetylglucosamine 1-carboxyvinyltransferase</fullName>
        <ecNumber evidence="1">2.5.1.7</ecNumber>
    </recommendedName>
    <alternativeName>
        <fullName evidence="1">Enoylpyruvate transferase</fullName>
    </alternativeName>
    <alternativeName>
        <fullName evidence="1">UDP-N-acetylglucosamine enolpyruvyl transferase</fullName>
        <shortName evidence="1">EPT</shortName>
    </alternativeName>
</protein>
<sequence>MDKLIITGGARLDGEIRISGAKNAALPILAATLLADGPVTVGNLPHLHDITTMIELFGRMGIEPVIDEKLSVEIDPRTIKTLVAPYELVKTMRASILVLGPMVARFGEAEVALPGGCAIGSRPVDLHIRGLEAMGAKIEVEGGYIKAKAPEGGLRGAHFFFDTVSVTGTENIMMAAALAKGRSVLQNAAREPEVVDLANFINAMGGNVQGAGTDTITIDGVERLHSANYRVMPDRIETGTYLVAAAVTGGRVKVKDTDPTILEAVLEKLKEAGADINTGEDWIELDMHGKRPKAVNLRTAPYPAFPTDMQAQFISLNAIAEGTGAVIETIFENRFMHVYEMHRMGAQIQVEGNTAIVTGVKALKGAPVMATDLRASASLVLSALVAEGDTLIDRIYHIDRGYECIEEKLQMLGAKIRRVPG</sequence>
<reference key="1">
    <citation type="submission" date="2008-01" db="EMBL/GenBank/DDBJ databases">
        <title>Complete sequence of Pseudomonas putida GB-1.</title>
        <authorList>
            <consortium name="US DOE Joint Genome Institute"/>
            <person name="Copeland A."/>
            <person name="Lucas S."/>
            <person name="Lapidus A."/>
            <person name="Barry K."/>
            <person name="Glavina del Rio T."/>
            <person name="Dalin E."/>
            <person name="Tice H."/>
            <person name="Pitluck S."/>
            <person name="Bruce D."/>
            <person name="Goodwin L."/>
            <person name="Chertkov O."/>
            <person name="Brettin T."/>
            <person name="Detter J.C."/>
            <person name="Han C."/>
            <person name="Kuske C.R."/>
            <person name="Schmutz J."/>
            <person name="Larimer F."/>
            <person name="Land M."/>
            <person name="Hauser L."/>
            <person name="Kyrpides N."/>
            <person name="Kim E."/>
            <person name="McCarthy J.K."/>
            <person name="Richardson P."/>
        </authorList>
    </citation>
    <scope>NUCLEOTIDE SEQUENCE [LARGE SCALE GENOMIC DNA]</scope>
    <source>
        <strain>GB-1</strain>
    </source>
</reference>